<sequence length="243" mass="26956">MEYKINPIYRRIMLKISGEALQGTENFGVDSSILDRMVLEIKELVNIGVQIGMIIGGGNLFRGSRLVQFGMNKVIGDHIGMLATIMNGLVMHNALHRVYVDSSVMSAIPLQGVCDNYNWMRAIDLLSNNKVVIFGAGTGNPFFTTDSAACLRGIEISANAVFKATKVDGVFAHDPIQYPNHNIALYEQLSYQDVLQRELKVMDLTAFALARDHNLPIHIFNINKVGALKRIIMGYREGTVITK</sequence>
<comment type="function">
    <text evidence="1">Catalyzes the reversible phosphorylation of UMP to UDP.</text>
</comment>
<comment type="catalytic activity">
    <reaction evidence="1">
        <text>UMP + ATP = UDP + ADP</text>
        <dbReference type="Rhea" id="RHEA:24400"/>
        <dbReference type="ChEBI" id="CHEBI:30616"/>
        <dbReference type="ChEBI" id="CHEBI:57865"/>
        <dbReference type="ChEBI" id="CHEBI:58223"/>
        <dbReference type="ChEBI" id="CHEBI:456216"/>
        <dbReference type="EC" id="2.7.4.22"/>
    </reaction>
</comment>
<comment type="activity regulation">
    <text evidence="1">Inhibited by UTP.</text>
</comment>
<comment type="pathway">
    <text evidence="1">Pyrimidine metabolism; CTP biosynthesis via de novo pathway; UDP from UMP (UMPK route): step 1/1.</text>
</comment>
<comment type="subunit">
    <text evidence="1">Homohexamer.</text>
</comment>
<comment type="subcellular location">
    <subcellularLocation>
        <location evidence="1">Cytoplasm</location>
    </subcellularLocation>
</comment>
<comment type="similarity">
    <text evidence="1">Belongs to the UMP kinase family.</text>
</comment>
<organism>
    <name type="scientific">Blochmanniella floridana</name>
    <dbReference type="NCBI Taxonomy" id="203907"/>
    <lineage>
        <taxon>Bacteria</taxon>
        <taxon>Pseudomonadati</taxon>
        <taxon>Pseudomonadota</taxon>
        <taxon>Gammaproteobacteria</taxon>
        <taxon>Enterobacterales</taxon>
        <taxon>Enterobacteriaceae</taxon>
        <taxon>ant endosymbionts</taxon>
        <taxon>Candidatus Blochmanniella</taxon>
    </lineage>
</organism>
<evidence type="ECO:0000255" key="1">
    <source>
        <dbReference type="HAMAP-Rule" id="MF_01220"/>
    </source>
</evidence>
<gene>
    <name evidence="1" type="primary">pyrH</name>
    <name type="ordered locus">Bfl273</name>
</gene>
<name>PYRH_BLOFL</name>
<keyword id="KW-0067">ATP-binding</keyword>
<keyword id="KW-0963">Cytoplasm</keyword>
<keyword id="KW-0418">Kinase</keyword>
<keyword id="KW-0547">Nucleotide-binding</keyword>
<keyword id="KW-0665">Pyrimidine biosynthesis</keyword>
<keyword id="KW-1185">Reference proteome</keyword>
<keyword id="KW-0808">Transferase</keyword>
<accession>Q7VRE4</accession>
<reference key="1">
    <citation type="journal article" date="2003" name="Proc. Natl. Acad. Sci. U.S.A.">
        <title>The genome sequence of Blochmannia floridanus: comparative analysis of reduced genomes.</title>
        <authorList>
            <person name="Gil R."/>
            <person name="Silva F.J."/>
            <person name="Zientz E."/>
            <person name="Delmotte F."/>
            <person name="Gonzalez-Candelas F."/>
            <person name="Latorre A."/>
            <person name="Rausell C."/>
            <person name="Kamerbeek J."/>
            <person name="Gadau J."/>
            <person name="Hoelldobler B."/>
            <person name="van Ham R.C.H.J."/>
            <person name="Gross R."/>
            <person name="Moya A."/>
        </authorList>
    </citation>
    <scope>NUCLEOTIDE SEQUENCE [LARGE SCALE GENOMIC DNA]</scope>
</reference>
<proteinExistence type="inferred from homology"/>
<dbReference type="EC" id="2.7.4.22" evidence="1"/>
<dbReference type="EMBL" id="BX248583">
    <property type="protein sequence ID" value="CAD83344.1"/>
    <property type="molecule type" value="Genomic_DNA"/>
</dbReference>
<dbReference type="SMR" id="Q7VRE4"/>
<dbReference type="STRING" id="203907.Bfl273"/>
<dbReference type="KEGG" id="bfl:Bfl273"/>
<dbReference type="eggNOG" id="COG0528">
    <property type="taxonomic scope" value="Bacteria"/>
</dbReference>
<dbReference type="HOGENOM" id="CLU_033861_0_0_6"/>
<dbReference type="OrthoDB" id="9807458at2"/>
<dbReference type="UniPathway" id="UPA00159">
    <property type="reaction ID" value="UER00275"/>
</dbReference>
<dbReference type="Proteomes" id="UP000002192">
    <property type="component" value="Chromosome"/>
</dbReference>
<dbReference type="GO" id="GO:0005829">
    <property type="term" value="C:cytosol"/>
    <property type="evidence" value="ECO:0007669"/>
    <property type="project" value="TreeGrafter"/>
</dbReference>
<dbReference type="GO" id="GO:0005524">
    <property type="term" value="F:ATP binding"/>
    <property type="evidence" value="ECO:0007669"/>
    <property type="project" value="UniProtKB-KW"/>
</dbReference>
<dbReference type="GO" id="GO:0033862">
    <property type="term" value="F:UMP kinase activity"/>
    <property type="evidence" value="ECO:0007669"/>
    <property type="project" value="UniProtKB-EC"/>
</dbReference>
<dbReference type="GO" id="GO:0044210">
    <property type="term" value="P:'de novo' CTP biosynthetic process"/>
    <property type="evidence" value="ECO:0007669"/>
    <property type="project" value="UniProtKB-UniRule"/>
</dbReference>
<dbReference type="GO" id="GO:0006225">
    <property type="term" value="P:UDP biosynthetic process"/>
    <property type="evidence" value="ECO:0007669"/>
    <property type="project" value="TreeGrafter"/>
</dbReference>
<dbReference type="CDD" id="cd04254">
    <property type="entry name" value="AAK_UMPK-PyrH-Ec"/>
    <property type="match status" value="1"/>
</dbReference>
<dbReference type="FunFam" id="3.40.1160.10:FF:000001">
    <property type="entry name" value="Uridylate kinase"/>
    <property type="match status" value="1"/>
</dbReference>
<dbReference type="Gene3D" id="3.40.1160.10">
    <property type="entry name" value="Acetylglutamate kinase-like"/>
    <property type="match status" value="1"/>
</dbReference>
<dbReference type="HAMAP" id="MF_01220_B">
    <property type="entry name" value="PyrH_B"/>
    <property type="match status" value="1"/>
</dbReference>
<dbReference type="InterPro" id="IPR036393">
    <property type="entry name" value="AceGlu_kinase-like_sf"/>
</dbReference>
<dbReference type="InterPro" id="IPR001048">
    <property type="entry name" value="Asp/Glu/Uridylate_kinase"/>
</dbReference>
<dbReference type="InterPro" id="IPR011817">
    <property type="entry name" value="Uridylate_kinase"/>
</dbReference>
<dbReference type="InterPro" id="IPR015963">
    <property type="entry name" value="Uridylate_kinase_bac"/>
</dbReference>
<dbReference type="NCBIfam" id="TIGR02075">
    <property type="entry name" value="pyrH_bact"/>
    <property type="match status" value="1"/>
</dbReference>
<dbReference type="PANTHER" id="PTHR42833">
    <property type="entry name" value="URIDYLATE KINASE"/>
    <property type="match status" value="1"/>
</dbReference>
<dbReference type="PANTHER" id="PTHR42833:SF4">
    <property type="entry name" value="URIDYLATE KINASE PUMPKIN, CHLOROPLASTIC"/>
    <property type="match status" value="1"/>
</dbReference>
<dbReference type="Pfam" id="PF00696">
    <property type="entry name" value="AA_kinase"/>
    <property type="match status" value="1"/>
</dbReference>
<dbReference type="PIRSF" id="PIRSF005650">
    <property type="entry name" value="Uridylate_kin"/>
    <property type="match status" value="1"/>
</dbReference>
<dbReference type="SUPFAM" id="SSF53633">
    <property type="entry name" value="Carbamate kinase-like"/>
    <property type="match status" value="1"/>
</dbReference>
<protein>
    <recommendedName>
        <fullName evidence="1">Uridylate kinase</fullName>
        <shortName evidence="1">UK</shortName>
        <ecNumber evidence="1">2.7.4.22</ecNumber>
    </recommendedName>
    <alternativeName>
        <fullName evidence="1">Uridine monophosphate kinase</fullName>
        <shortName evidence="1">UMP kinase</shortName>
        <shortName evidence="1">UMPK</shortName>
    </alternativeName>
</protein>
<feature type="chain" id="PRO_0000323795" description="Uridylate kinase">
    <location>
        <begin position="1"/>
        <end position="243"/>
    </location>
</feature>
<feature type="binding site" evidence="1">
    <location>
        <begin position="15"/>
        <end position="18"/>
    </location>
    <ligand>
        <name>ATP</name>
        <dbReference type="ChEBI" id="CHEBI:30616"/>
    </ligand>
</feature>
<feature type="binding site" evidence="1">
    <location>
        <position position="57"/>
    </location>
    <ligand>
        <name>UMP</name>
        <dbReference type="ChEBI" id="CHEBI:57865"/>
    </ligand>
</feature>
<feature type="binding site" evidence="1">
    <location>
        <position position="58"/>
    </location>
    <ligand>
        <name>ATP</name>
        <dbReference type="ChEBI" id="CHEBI:30616"/>
    </ligand>
</feature>
<feature type="binding site" evidence="1">
    <location>
        <position position="62"/>
    </location>
    <ligand>
        <name>ATP</name>
        <dbReference type="ChEBI" id="CHEBI:30616"/>
    </ligand>
</feature>
<feature type="binding site" evidence="1">
    <location>
        <position position="77"/>
    </location>
    <ligand>
        <name>UMP</name>
        <dbReference type="ChEBI" id="CHEBI:57865"/>
    </ligand>
</feature>
<feature type="binding site" evidence="1">
    <location>
        <begin position="138"/>
        <end position="145"/>
    </location>
    <ligand>
        <name>UMP</name>
        <dbReference type="ChEBI" id="CHEBI:57865"/>
    </ligand>
</feature>
<feature type="binding site" evidence="1">
    <location>
        <position position="165"/>
    </location>
    <ligand>
        <name>ATP</name>
        <dbReference type="ChEBI" id="CHEBI:30616"/>
    </ligand>
</feature>
<feature type="binding site" evidence="1">
    <location>
        <position position="171"/>
    </location>
    <ligand>
        <name>ATP</name>
        <dbReference type="ChEBI" id="CHEBI:30616"/>
    </ligand>
</feature>
<feature type="binding site" evidence="1">
    <location>
        <position position="174"/>
    </location>
    <ligand>
        <name>ATP</name>
        <dbReference type="ChEBI" id="CHEBI:30616"/>
    </ligand>
</feature>